<gene>
    <name type="primary">regA</name>
</gene>
<keyword id="KW-0678">Repressor</keyword>
<keyword id="KW-0694">RNA-binding</keyword>
<keyword id="KW-0810">Translation regulation</keyword>
<proteinExistence type="inferred from homology"/>
<reference key="1">
    <citation type="journal article" date="1990" name="J. Bacteriol.">
        <title>Sequence analysis of conserved regA and variable orf43.1 genes in T4-like bacteriophages.</title>
        <authorList>
            <person name="Miller E.S."/>
            <person name="Jozwik C.E."/>
        </authorList>
    </citation>
    <scope>NUCLEOTIDE SEQUENCE [GENOMIC DNA]</scope>
</reference>
<protein>
    <recommendedName>
        <fullName>Translation repressor protein</fullName>
    </recommendedName>
</protein>
<feature type="chain" id="PRO_0000164970" description="Translation repressor protein">
    <location>
        <begin position="1"/>
        <end position="122"/>
    </location>
</feature>
<feature type="DNA-binding region" description="H-T-H motif" evidence="2">
    <location>
        <begin position="15"/>
        <end position="37"/>
    </location>
</feature>
<accession>P69627</accession>
<accession>P04528</accession>
<organismHost>
    <name type="scientific">Escherichia coli</name>
    <dbReference type="NCBI Taxonomy" id="562"/>
</organismHost>
<evidence type="ECO:0000250" key="1"/>
<evidence type="ECO:0000255" key="2"/>
<sequence length="122" mass="14619">MIEITLKKPEDFLKVKETLTRMGIANNKDKVLYQSCHILQKKGLYYIVHFKEMLRMDGRQVEMTEEDEVRRDSIAWLLEDWGLIEIVPGQRTFMKDLTNNFRVISFKQKHEWKLVPKYTIGN</sequence>
<name>REGA_BPR18</name>
<dbReference type="EMBL" id="M33533">
    <property type="protein sequence ID" value="AAA72827.1"/>
    <property type="molecule type" value="Genomic_DNA"/>
</dbReference>
<dbReference type="RefSeq" id="YP_010066932.1">
    <property type="nucleotide sequence ID" value="NC_054906.1"/>
</dbReference>
<dbReference type="SMR" id="P69627"/>
<dbReference type="GeneID" id="65055530"/>
<dbReference type="GO" id="GO:0003723">
    <property type="term" value="F:RNA binding"/>
    <property type="evidence" value="ECO:0007669"/>
    <property type="project" value="UniProtKB-KW"/>
</dbReference>
<dbReference type="GO" id="GO:0006417">
    <property type="term" value="P:regulation of translation"/>
    <property type="evidence" value="ECO:0007669"/>
    <property type="project" value="UniProtKB-KW"/>
</dbReference>
<dbReference type="Gene3D" id="3.30.70.650">
    <property type="entry name" value="Translation repressor RegA"/>
    <property type="match status" value="1"/>
</dbReference>
<dbReference type="InterPro" id="IPR002702">
    <property type="entry name" value="Transl_repress_RegA"/>
</dbReference>
<dbReference type="InterPro" id="IPR036516">
    <property type="entry name" value="Transl_repress_RegA_sf"/>
</dbReference>
<dbReference type="Pfam" id="PF01818">
    <property type="entry name" value="Translat_reg"/>
    <property type="match status" value="1"/>
</dbReference>
<dbReference type="SUPFAM" id="SSF55064">
    <property type="entry name" value="Translational regulator protein regA"/>
    <property type="match status" value="1"/>
</dbReference>
<comment type="function">
    <text evidence="1">Controls the translation of a number of proteins (such as regA itself, rIIB and at least 35 others) by binding to their mRNA.</text>
</comment>
<organism>
    <name type="scientific">Enterobacteria phage RB18</name>
    <name type="common">Bacteriophage RB18</name>
    <dbReference type="NCBI Taxonomy" id="10692"/>
    <lineage>
        <taxon>Viruses</taxon>
        <taxon>Duplodnaviria</taxon>
        <taxon>Heunggongvirae</taxon>
        <taxon>Uroviricota</taxon>
        <taxon>Caudoviricetes</taxon>
        <taxon>Straboviridae</taxon>
        <taxon>Tevenvirinae</taxon>
        <taxon>Tequatrovirus</taxon>
        <taxon>Tequatrovirus RB18</taxon>
    </lineage>
</organism>